<feature type="chain" id="PRO_0000056977" description="NAD-capped RNA hydrolase NudC">
    <location>
        <begin position="1"/>
        <end position="257"/>
    </location>
</feature>
<feature type="domain" description="Nudix hydrolase" evidence="1">
    <location>
        <begin position="125"/>
        <end position="248"/>
    </location>
</feature>
<feature type="short sequence motif" description="Nudix box" evidence="1">
    <location>
        <begin position="159"/>
        <end position="180"/>
    </location>
</feature>
<feature type="binding site" evidence="1">
    <location>
        <position position="25"/>
    </location>
    <ligand>
        <name>substrate</name>
    </ligand>
</feature>
<feature type="binding site" evidence="1">
    <location>
        <position position="69"/>
    </location>
    <ligand>
        <name>substrate</name>
    </ligand>
</feature>
<feature type="binding site" evidence="1">
    <location>
        <position position="98"/>
    </location>
    <ligand>
        <name>Zn(2+)</name>
        <dbReference type="ChEBI" id="CHEBI:29105"/>
    </ligand>
</feature>
<feature type="binding site" evidence="1">
    <location>
        <position position="101"/>
    </location>
    <ligand>
        <name>Zn(2+)</name>
        <dbReference type="ChEBI" id="CHEBI:29105"/>
    </ligand>
</feature>
<feature type="binding site" evidence="1">
    <location>
        <position position="111"/>
    </location>
    <ligand>
        <name>substrate</name>
    </ligand>
</feature>
<feature type="binding site" evidence="1">
    <location>
        <position position="116"/>
    </location>
    <ligand>
        <name>Zn(2+)</name>
        <dbReference type="ChEBI" id="CHEBI:29105"/>
    </ligand>
</feature>
<feature type="binding site" evidence="1">
    <location>
        <position position="119"/>
    </location>
    <ligand>
        <name>Zn(2+)</name>
        <dbReference type="ChEBI" id="CHEBI:29105"/>
    </ligand>
</feature>
<feature type="binding site" evidence="1">
    <location>
        <position position="124"/>
    </location>
    <ligand>
        <name>substrate</name>
    </ligand>
</feature>
<feature type="binding site" evidence="1">
    <location>
        <position position="158"/>
    </location>
    <ligand>
        <name>a divalent metal cation</name>
        <dbReference type="ChEBI" id="CHEBI:60240"/>
        <label>1</label>
    </ligand>
</feature>
<feature type="binding site" evidence="1">
    <location>
        <position position="174"/>
    </location>
    <ligand>
        <name>a divalent metal cation</name>
        <dbReference type="ChEBI" id="CHEBI:60240"/>
        <label>2</label>
    </ligand>
</feature>
<feature type="binding site" evidence="1">
    <location>
        <position position="174"/>
    </location>
    <ligand>
        <name>a divalent metal cation</name>
        <dbReference type="ChEBI" id="CHEBI:60240"/>
        <label>3</label>
    </ligand>
</feature>
<feature type="binding site" evidence="1">
    <location>
        <position position="178"/>
    </location>
    <ligand>
        <name>a divalent metal cation</name>
        <dbReference type="ChEBI" id="CHEBI:60240"/>
        <label>1</label>
    </ligand>
</feature>
<feature type="binding site" evidence="1">
    <location>
        <position position="178"/>
    </location>
    <ligand>
        <name>a divalent metal cation</name>
        <dbReference type="ChEBI" id="CHEBI:60240"/>
        <label>3</label>
    </ligand>
</feature>
<feature type="binding site" evidence="1">
    <location>
        <begin position="192"/>
        <end position="199"/>
    </location>
    <ligand>
        <name>substrate</name>
    </ligand>
</feature>
<feature type="binding site" evidence="1">
    <location>
        <position position="219"/>
    </location>
    <ligand>
        <name>a divalent metal cation</name>
        <dbReference type="ChEBI" id="CHEBI:60240"/>
        <label>1</label>
    </ligand>
</feature>
<feature type="binding site" evidence="1">
    <location>
        <position position="219"/>
    </location>
    <ligand>
        <name>a divalent metal cation</name>
        <dbReference type="ChEBI" id="CHEBI:60240"/>
        <label>3</label>
    </ligand>
</feature>
<feature type="binding site" evidence="1">
    <location>
        <position position="241"/>
    </location>
    <ligand>
        <name>substrate</name>
    </ligand>
</feature>
<name>NUDC_SHIFL</name>
<gene>
    <name evidence="1" type="primary">nudC</name>
    <name type="ordered locus">SF4068</name>
    <name type="ordered locus">S3667</name>
</gene>
<sequence>MDRIIEKLDHGWWVVSHEQKLWLPKGELPYGEAANFDLVGQRALQIGEWQGEPVWLIQQQRRHDMGSVRQVIDLDVGLFQLAGRGVQLAEFYRSHKYCGYCGHEMYPSKTEWAMLCSHCRERYYPQIAPCIIVAIRRDDSLLLAQHTRHRNGVHTVLAGFVEVGETLEQAVAREVMEESGIKVKNLRYVTSQPWPFPQSLMTAFMAEYDSGDIVIDPKELLEANWYRYDDLPLLPPPGTVARRLIEDTVAMCRAEYE</sequence>
<protein>
    <recommendedName>
        <fullName evidence="1">NAD-capped RNA hydrolase NudC</fullName>
        <shortName evidence="1">DeNADding enzyme NudC</shortName>
        <ecNumber evidence="1">3.6.1.-</ecNumber>
    </recommendedName>
    <alternativeName>
        <fullName evidence="1">NADH pyrophosphatase</fullName>
        <ecNumber evidence="1">3.6.1.22</ecNumber>
    </alternativeName>
</protein>
<evidence type="ECO:0000255" key="1">
    <source>
        <dbReference type="HAMAP-Rule" id="MF_00297"/>
    </source>
</evidence>
<comment type="function">
    <text evidence="1">mRNA decapping enzyme that specifically removes the nicotinamide adenine dinucleotide (NAD) cap from a subset of mRNAs by hydrolyzing the diphosphate linkage to produce nicotinamide mononucleotide (NMN) and 5' monophosphate mRNA. The NAD-cap is present at the 5'-end of some mRNAs and stabilizes RNA against 5'-processing. Has preference for mRNAs with a 5'-end purine. Catalyzes the hydrolysis of a broad range of dinucleotide pyrophosphates.</text>
</comment>
<comment type="catalytic activity">
    <reaction evidence="1">
        <text>a 5'-end NAD(+)-phospho-ribonucleoside in mRNA + H2O = a 5'-end phospho-adenosine-phospho-ribonucleoside in mRNA + beta-nicotinamide D-ribonucleotide + 2 H(+)</text>
        <dbReference type="Rhea" id="RHEA:60876"/>
        <dbReference type="Rhea" id="RHEA-COMP:15698"/>
        <dbReference type="Rhea" id="RHEA-COMP:15719"/>
        <dbReference type="ChEBI" id="CHEBI:14649"/>
        <dbReference type="ChEBI" id="CHEBI:15377"/>
        <dbReference type="ChEBI" id="CHEBI:15378"/>
        <dbReference type="ChEBI" id="CHEBI:144029"/>
        <dbReference type="ChEBI" id="CHEBI:144051"/>
    </reaction>
    <physiologicalReaction direction="left-to-right" evidence="1">
        <dbReference type="Rhea" id="RHEA:60877"/>
    </physiologicalReaction>
</comment>
<comment type="catalytic activity">
    <reaction evidence="1">
        <text>NAD(+) + H2O = beta-nicotinamide D-ribonucleotide + AMP + 2 H(+)</text>
        <dbReference type="Rhea" id="RHEA:11800"/>
        <dbReference type="ChEBI" id="CHEBI:14649"/>
        <dbReference type="ChEBI" id="CHEBI:15377"/>
        <dbReference type="ChEBI" id="CHEBI:15378"/>
        <dbReference type="ChEBI" id="CHEBI:57540"/>
        <dbReference type="ChEBI" id="CHEBI:456215"/>
        <dbReference type="EC" id="3.6.1.22"/>
    </reaction>
</comment>
<comment type="catalytic activity">
    <reaction evidence="1">
        <text>NADH + H2O = reduced beta-nicotinamide D-ribonucleotide + AMP + 2 H(+)</text>
        <dbReference type="Rhea" id="RHEA:48868"/>
        <dbReference type="ChEBI" id="CHEBI:15377"/>
        <dbReference type="ChEBI" id="CHEBI:15378"/>
        <dbReference type="ChEBI" id="CHEBI:57945"/>
        <dbReference type="ChEBI" id="CHEBI:90832"/>
        <dbReference type="ChEBI" id="CHEBI:456215"/>
        <dbReference type="EC" id="3.6.1.22"/>
    </reaction>
</comment>
<comment type="cofactor">
    <cofactor evidence="1">
        <name>Mg(2+)</name>
        <dbReference type="ChEBI" id="CHEBI:18420"/>
    </cofactor>
    <cofactor evidence="1">
        <name>Mn(2+)</name>
        <dbReference type="ChEBI" id="CHEBI:29035"/>
    </cofactor>
    <text evidence="1">Divalent metal cations. Mg(2+) or Mn(2+).</text>
</comment>
<comment type="cofactor">
    <cofactor evidence="1">
        <name>Zn(2+)</name>
        <dbReference type="ChEBI" id="CHEBI:29105"/>
    </cofactor>
    <text evidence="1">Binds 1 zinc ion per subunit.</text>
</comment>
<comment type="subunit">
    <text evidence="1">Homodimer.</text>
</comment>
<comment type="similarity">
    <text evidence="1">Belongs to the Nudix hydrolase family. NudC subfamily.</text>
</comment>
<organism>
    <name type="scientific">Shigella flexneri</name>
    <dbReference type="NCBI Taxonomy" id="623"/>
    <lineage>
        <taxon>Bacteria</taxon>
        <taxon>Pseudomonadati</taxon>
        <taxon>Pseudomonadota</taxon>
        <taxon>Gammaproteobacteria</taxon>
        <taxon>Enterobacterales</taxon>
        <taxon>Enterobacteriaceae</taxon>
        <taxon>Shigella</taxon>
    </lineage>
</organism>
<reference key="1">
    <citation type="journal article" date="2002" name="Nucleic Acids Res.">
        <title>Genome sequence of Shigella flexneri 2a: insights into pathogenicity through comparison with genomes of Escherichia coli K12 and O157.</title>
        <authorList>
            <person name="Jin Q."/>
            <person name="Yuan Z."/>
            <person name="Xu J."/>
            <person name="Wang Y."/>
            <person name="Shen Y."/>
            <person name="Lu W."/>
            <person name="Wang J."/>
            <person name="Liu H."/>
            <person name="Yang J."/>
            <person name="Yang F."/>
            <person name="Zhang X."/>
            <person name="Zhang J."/>
            <person name="Yang G."/>
            <person name="Wu H."/>
            <person name="Qu D."/>
            <person name="Dong J."/>
            <person name="Sun L."/>
            <person name="Xue Y."/>
            <person name="Zhao A."/>
            <person name="Gao Y."/>
            <person name="Zhu J."/>
            <person name="Kan B."/>
            <person name="Ding K."/>
            <person name="Chen S."/>
            <person name="Cheng H."/>
            <person name="Yao Z."/>
            <person name="He B."/>
            <person name="Chen R."/>
            <person name="Ma D."/>
            <person name="Qiang B."/>
            <person name="Wen Y."/>
            <person name="Hou Y."/>
            <person name="Yu J."/>
        </authorList>
    </citation>
    <scope>NUCLEOTIDE SEQUENCE [LARGE SCALE GENOMIC DNA]</scope>
    <source>
        <strain>301 / Serotype 2a</strain>
    </source>
</reference>
<reference key="2">
    <citation type="journal article" date="2003" name="Infect. Immun.">
        <title>Complete genome sequence and comparative genomics of Shigella flexneri serotype 2a strain 2457T.</title>
        <authorList>
            <person name="Wei J."/>
            <person name="Goldberg M.B."/>
            <person name="Burland V."/>
            <person name="Venkatesan M.M."/>
            <person name="Deng W."/>
            <person name="Fournier G."/>
            <person name="Mayhew G.F."/>
            <person name="Plunkett G. III"/>
            <person name="Rose D.J."/>
            <person name="Darling A."/>
            <person name="Mau B."/>
            <person name="Perna N.T."/>
            <person name="Payne S.M."/>
            <person name="Runyen-Janecky L.J."/>
            <person name="Zhou S."/>
            <person name="Schwartz D.C."/>
            <person name="Blattner F.R."/>
        </authorList>
    </citation>
    <scope>NUCLEOTIDE SEQUENCE [LARGE SCALE GENOMIC DNA]</scope>
    <source>
        <strain>ATCC 700930 / 2457T / Serotype 2a</strain>
    </source>
</reference>
<accession>Q83IS3</accession>
<accession>Q7BZH7</accession>
<proteinExistence type="inferred from homology"/>
<keyword id="KW-0378">Hydrolase</keyword>
<keyword id="KW-0460">Magnesium</keyword>
<keyword id="KW-0464">Manganese</keyword>
<keyword id="KW-0479">Metal-binding</keyword>
<keyword id="KW-0520">NAD</keyword>
<keyword id="KW-1185">Reference proteome</keyword>
<keyword id="KW-0862">Zinc</keyword>
<dbReference type="EC" id="3.6.1.-" evidence="1"/>
<dbReference type="EC" id="3.6.1.22" evidence="1"/>
<dbReference type="EMBL" id="AE005674">
    <property type="protein sequence ID" value="AAN45497.1"/>
    <property type="molecule type" value="Genomic_DNA"/>
</dbReference>
<dbReference type="EMBL" id="AE014073">
    <property type="protein sequence ID" value="AAP18704.1"/>
    <property type="molecule type" value="Genomic_DNA"/>
</dbReference>
<dbReference type="RefSeq" id="NP_709790.1">
    <property type="nucleotide sequence ID" value="NC_004337.2"/>
</dbReference>
<dbReference type="RefSeq" id="WP_000373931.1">
    <property type="nucleotide sequence ID" value="NZ_WPGW01000040.1"/>
</dbReference>
<dbReference type="SMR" id="Q83IS3"/>
<dbReference type="STRING" id="198214.SF4068"/>
<dbReference type="PaxDb" id="198214-SF4068"/>
<dbReference type="GeneID" id="1025541"/>
<dbReference type="KEGG" id="sfl:SF4068"/>
<dbReference type="KEGG" id="sfx:S3667"/>
<dbReference type="PATRIC" id="fig|198214.7.peg.4792"/>
<dbReference type="HOGENOM" id="CLU_037162_0_1_6"/>
<dbReference type="Proteomes" id="UP000001006">
    <property type="component" value="Chromosome"/>
</dbReference>
<dbReference type="Proteomes" id="UP000002673">
    <property type="component" value="Chromosome"/>
</dbReference>
<dbReference type="GO" id="GO:0005829">
    <property type="term" value="C:cytosol"/>
    <property type="evidence" value="ECO:0007669"/>
    <property type="project" value="TreeGrafter"/>
</dbReference>
<dbReference type="GO" id="GO:0000287">
    <property type="term" value="F:magnesium ion binding"/>
    <property type="evidence" value="ECO:0007669"/>
    <property type="project" value="UniProtKB-UniRule"/>
</dbReference>
<dbReference type="GO" id="GO:0030145">
    <property type="term" value="F:manganese ion binding"/>
    <property type="evidence" value="ECO:0007669"/>
    <property type="project" value="UniProtKB-UniRule"/>
</dbReference>
<dbReference type="GO" id="GO:0000210">
    <property type="term" value="F:NAD+ diphosphatase activity"/>
    <property type="evidence" value="ECO:0007669"/>
    <property type="project" value="UniProtKB-UniRule"/>
</dbReference>
<dbReference type="GO" id="GO:0035529">
    <property type="term" value="F:NADH pyrophosphatase activity"/>
    <property type="evidence" value="ECO:0007669"/>
    <property type="project" value="TreeGrafter"/>
</dbReference>
<dbReference type="GO" id="GO:0110153">
    <property type="term" value="F:RNA NAD-cap (NMN-forming) hydrolase activity"/>
    <property type="evidence" value="ECO:0007669"/>
    <property type="project" value="RHEA"/>
</dbReference>
<dbReference type="GO" id="GO:0008270">
    <property type="term" value="F:zinc ion binding"/>
    <property type="evidence" value="ECO:0007669"/>
    <property type="project" value="UniProtKB-UniRule"/>
</dbReference>
<dbReference type="GO" id="GO:0019677">
    <property type="term" value="P:NAD catabolic process"/>
    <property type="evidence" value="ECO:0007669"/>
    <property type="project" value="TreeGrafter"/>
</dbReference>
<dbReference type="GO" id="GO:0006734">
    <property type="term" value="P:NADH metabolic process"/>
    <property type="evidence" value="ECO:0007669"/>
    <property type="project" value="TreeGrafter"/>
</dbReference>
<dbReference type="GO" id="GO:0006742">
    <property type="term" value="P:NADP catabolic process"/>
    <property type="evidence" value="ECO:0007669"/>
    <property type="project" value="TreeGrafter"/>
</dbReference>
<dbReference type="CDD" id="cd03429">
    <property type="entry name" value="NUDIX_NADH_pyrophosphatase_Nudt13"/>
    <property type="match status" value="1"/>
</dbReference>
<dbReference type="FunFam" id="3.90.79.10:FF:000004">
    <property type="entry name" value="NADH pyrophosphatase"/>
    <property type="match status" value="1"/>
</dbReference>
<dbReference type="FunFam" id="3.90.79.20:FF:000001">
    <property type="entry name" value="NADH pyrophosphatase"/>
    <property type="match status" value="1"/>
</dbReference>
<dbReference type="Gene3D" id="3.90.79.20">
    <property type="match status" value="1"/>
</dbReference>
<dbReference type="Gene3D" id="3.90.79.10">
    <property type="entry name" value="Nucleoside Triphosphate Pyrophosphohydrolase"/>
    <property type="match status" value="1"/>
</dbReference>
<dbReference type="HAMAP" id="MF_00297">
    <property type="entry name" value="Nudix_NudC"/>
    <property type="match status" value="1"/>
</dbReference>
<dbReference type="InterPro" id="IPR050241">
    <property type="entry name" value="NAD-cap_RNA_hydrolase_NudC"/>
</dbReference>
<dbReference type="InterPro" id="IPR049734">
    <property type="entry name" value="NudC-like_C"/>
</dbReference>
<dbReference type="InterPro" id="IPR015797">
    <property type="entry name" value="NUDIX_hydrolase-like_dom_sf"/>
</dbReference>
<dbReference type="InterPro" id="IPR020084">
    <property type="entry name" value="NUDIX_hydrolase_CS"/>
</dbReference>
<dbReference type="InterPro" id="IPR000086">
    <property type="entry name" value="NUDIX_hydrolase_dom"/>
</dbReference>
<dbReference type="InterPro" id="IPR022925">
    <property type="entry name" value="RNA_Hydrolase_NudC"/>
</dbReference>
<dbReference type="InterPro" id="IPR015376">
    <property type="entry name" value="Znr_NADH_PPase"/>
</dbReference>
<dbReference type="NCBIfam" id="NF001299">
    <property type="entry name" value="PRK00241.1"/>
    <property type="match status" value="1"/>
</dbReference>
<dbReference type="PANTHER" id="PTHR42904:SF6">
    <property type="entry name" value="NAD-CAPPED RNA HYDROLASE NUDT12"/>
    <property type="match status" value="1"/>
</dbReference>
<dbReference type="PANTHER" id="PTHR42904">
    <property type="entry name" value="NUDIX HYDROLASE, NUDC SUBFAMILY"/>
    <property type="match status" value="1"/>
</dbReference>
<dbReference type="Pfam" id="PF00293">
    <property type="entry name" value="NUDIX"/>
    <property type="match status" value="1"/>
</dbReference>
<dbReference type="Pfam" id="PF09297">
    <property type="entry name" value="Zn_ribbon_NUD"/>
    <property type="match status" value="1"/>
</dbReference>
<dbReference type="SUPFAM" id="SSF55811">
    <property type="entry name" value="Nudix"/>
    <property type="match status" value="2"/>
</dbReference>
<dbReference type="PROSITE" id="PS51462">
    <property type="entry name" value="NUDIX"/>
    <property type="match status" value="1"/>
</dbReference>
<dbReference type="PROSITE" id="PS00893">
    <property type="entry name" value="NUDIX_BOX"/>
    <property type="match status" value="1"/>
</dbReference>